<reference key="1">
    <citation type="journal article" date="2003" name="Lancet">
        <title>Sequencing and analysis of the genome of the Whipple's disease bacterium Tropheryma whipplei.</title>
        <authorList>
            <person name="Bentley S.D."/>
            <person name="Maiwald M."/>
            <person name="Murphy L.D."/>
            <person name="Pallen M.J."/>
            <person name="Yeats C.A."/>
            <person name="Dover L.G."/>
            <person name="Norbertczak H.T."/>
            <person name="Besra G.S."/>
            <person name="Quail M.A."/>
            <person name="Harris D.E."/>
            <person name="von Herbay A."/>
            <person name="Goble A."/>
            <person name="Rutter S."/>
            <person name="Squares R."/>
            <person name="Squares S."/>
            <person name="Barrell B.G."/>
            <person name="Parkhill J."/>
            <person name="Relman D.A."/>
        </authorList>
    </citation>
    <scope>NUCLEOTIDE SEQUENCE [LARGE SCALE GENOMIC DNA]</scope>
    <source>
        <strain>TW08/27</strain>
    </source>
</reference>
<organism>
    <name type="scientific">Tropheryma whipplei (strain TW08/27)</name>
    <name type="common">Whipple's bacillus</name>
    <dbReference type="NCBI Taxonomy" id="218496"/>
    <lineage>
        <taxon>Bacteria</taxon>
        <taxon>Bacillati</taxon>
        <taxon>Actinomycetota</taxon>
        <taxon>Actinomycetes</taxon>
        <taxon>Micrococcales</taxon>
        <taxon>Tropherymataceae</taxon>
        <taxon>Tropheryma</taxon>
    </lineage>
</organism>
<name>KGUA_TROW8</name>
<evidence type="ECO:0000255" key="1">
    <source>
        <dbReference type="HAMAP-Rule" id="MF_00328"/>
    </source>
</evidence>
<dbReference type="EC" id="2.7.4.8" evidence="1"/>
<dbReference type="EMBL" id="BX251411">
    <property type="protein sequence ID" value="CAD67077.1"/>
    <property type="molecule type" value="Genomic_DNA"/>
</dbReference>
<dbReference type="SMR" id="Q83HT8"/>
<dbReference type="KEGG" id="tws:TW406"/>
<dbReference type="HOGENOM" id="CLU_001715_1_1_11"/>
<dbReference type="GO" id="GO:0005829">
    <property type="term" value="C:cytosol"/>
    <property type="evidence" value="ECO:0007669"/>
    <property type="project" value="TreeGrafter"/>
</dbReference>
<dbReference type="GO" id="GO:0005524">
    <property type="term" value="F:ATP binding"/>
    <property type="evidence" value="ECO:0007669"/>
    <property type="project" value="UniProtKB-UniRule"/>
</dbReference>
<dbReference type="GO" id="GO:0004385">
    <property type="term" value="F:guanylate kinase activity"/>
    <property type="evidence" value="ECO:0007669"/>
    <property type="project" value="UniProtKB-UniRule"/>
</dbReference>
<dbReference type="CDD" id="cd00071">
    <property type="entry name" value="GMPK"/>
    <property type="match status" value="1"/>
</dbReference>
<dbReference type="FunFam" id="3.30.63.10:FF:000002">
    <property type="entry name" value="Guanylate kinase 1"/>
    <property type="match status" value="1"/>
</dbReference>
<dbReference type="Gene3D" id="3.30.63.10">
    <property type="entry name" value="Guanylate Kinase phosphate binding domain"/>
    <property type="match status" value="1"/>
</dbReference>
<dbReference type="Gene3D" id="3.40.50.300">
    <property type="entry name" value="P-loop containing nucleotide triphosphate hydrolases"/>
    <property type="match status" value="1"/>
</dbReference>
<dbReference type="HAMAP" id="MF_00328">
    <property type="entry name" value="Guanylate_kinase"/>
    <property type="match status" value="1"/>
</dbReference>
<dbReference type="InterPro" id="IPR008145">
    <property type="entry name" value="GK/Ca_channel_bsu"/>
</dbReference>
<dbReference type="InterPro" id="IPR008144">
    <property type="entry name" value="Guanylate_kin-like_dom"/>
</dbReference>
<dbReference type="InterPro" id="IPR017665">
    <property type="entry name" value="Guanylate_kinase"/>
</dbReference>
<dbReference type="InterPro" id="IPR020590">
    <property type="entry name" value="Guanylate_kinase_CS"/>
</dbReference>
<dbReference type="InterPro" id="IPR027417">
    <property type="entry name" value="P-loop_NTPase"/>
</dbReference>
<dbReference type="NCBIfam" id="TIGR03263">
    <property type="entry name" value="guanyl_kin"/>
    <property type="match status" value="1"/>
</dbReference>
<dbReference type="PANTHER" id="PTHR23117:SF13">
    <property type="entry name" value="GUANYLATE KINASE"/>
    <property type="match status" value="1"/>
</dbReference>
<dbReference type="PANTHER" id="PTHR23117">
    <property type="entry name" value="GUANYLATE KINASE-RELATED"/>
    <property type="match status" value="1"/>
</dbReference>
<dbReference type="Pfam" id="PF00625">
    <property type="entry name" value="Guanylate_kin"/>
    <property type="match status" value="1"/>
</dbReference>
<dbReference type="SMART" id="SM00072">
    <property type="entry name" value="GuKc"/>
    <property type="match status" value="1"/>
</dbReference>
<dbReference type="SUPFAM" id="SSF52540">
    <property type="entry name" value="P-loop containing nucleoside triphosphate hydrolases"/>
    <property type="match status" value="1"/>
</dbReference>
<dbReference type="PROSITE" id="PS00856">
    <property type="entry name" value="GUANYLATE_KINASE_1"/>
    <property type="match status" value="1"/>
</dbReference>
<dbReference type="PROSITE" id="PS50052">
    <property type="entry name" value="GUANYLATE_KINASE_2"/>
    <property type="match status" value="1"/>
</dbReference>
<feature type="chain" id="PRO_0000170633" description="Guanylate kinase">
    <location>
        <begin position="1"/>
        <end position="193"/>
    </location>
</feature>
<feature type="domain" description="Guanylate kinase-like" evidence="1">
    <location>
        <begin position="12"/>
        <end position="191"/>
    </location>
</feature>
<feature type="binding site" evidence="1">
    <location>
        <begin position="19"/>
        <end position="26"/>
    </location>
    <ligand>
        <name>ATP</name>
        <dbReference type="ChEBI" id="CHEBI:30616"/>
    </ligand>
</feature>
<proteinExistence type="inferred from homology"/>
<accession>Q83HT8</accession>
<gene>
    <name evidence="1" type="primary">gmk</name>
    <name type="ordered locus">TW406</name>
</gene>
<comment type="function">
    <text evidence="1">Essential for recycling GMP and indirectly, cGMP.</text>
</comment>
<comment type="catalytic activity">
    <reaction evidence="1">
        <text>GMP + ATP = GDP + ADP</text>
        <dbReference type="Rhea" id="RHEA:20780"/>
        <dbReference type="ChEBI" id="CHEBI:30616"/>
        <dbReference type="ChEBI" id="CHEBI:58115"/>
        <dbReference type="ChEBI" id="CHEBI:58189"/>
        <dbReference type="ChEBI" id="CHEBI:456216"/>
        <dbReference type="EC" id="2.7.4.8"/>
    </reaction>
</comment>
<comment type="subcellular location">
    <subcellularLocation>
        <location evidence="1">Cytoplasm</location>
    </subcellularLocation>
</comment>
<comment type="similarity">
    <text evidence="1">Belongs to the guanylate kinase family.</text>
</comment>
<sequence length="193" mass="21894">MQLFDLWTDLLDLLTIVAGPTAVGKGTVISHLRKCHPQVKVSISATTREPRDSERDGIDYYFVTDEVFDCMVRSGQMLEWATVHGLHKYGTPKEEVERLLHTGQPVILEIDLQGMRKVRKILPAVRTVILLPPAWDDLICRIKRRGSESQDEIDARLATAKKELEAIGEFDYKIVNADVEIAANELWLAMNRV</sequence>
<keyword id="KW-0067">ATP-binding</keyword>
<keyword id="KW-0963">Cytoplasm</keyword>
<keyword id="KW-0418">Kinase</keyword>
<keyword id="KW-0547">Nucleotide-binding</keyword>
<keyword id="KW-0808">Transferase</keyword>
<protein>
    <recommendedName>
        <fullName evidence="1">Guanylate kinase</fullName>
        <ecNumber evidence="1">2.7.4.8</ecNumber>
    </recommendedName>
    <alternativeName>
        <fullName evidence="1">GMP kinase</fullName>
    </alternativeName>
</protein>